<evidence type="ECO:0000255" key="1">
    <source>
        <dbReference type="HAMAP-Rule" id="MF_00009"/>
    </source>
</evidence>
<gene>
    <name evidence="1" type="primary">ybeY</name>
    <name type="ordered locus">Mpe_A3240</name>
</gene>
<accession>A2SKV4</accession>
<sequence length="149" mass="16813">MKRPARPVLKLSLQFADASHRAQLPRHKVLRWIRAALDVPAEITVRIVGTDEGRALNRDYRQKDYATNVLTFDYEAEPVVVADLILCAPVVEREARDEGRSLEAHYAHLLVHGTLHAQGHDHEIEAEAQAMEARETEVLRALGYADPYA</sequence>
<reference key="1">
    <citation type="journal article" date="2007" name="J. Bacteriol.">
        <title>Whole-genome analysis of the methyl tert-butyl ether-degrading beta-proteobacterium Methylibium petroleiphilum PM1.</title>
        <authorList>
            <person name="Kane S.R."/>
            <person name="Chakicherla A.Y."/>
            <person name="Chain P.S.G."/>
            <person name="Schmidt R."/>
            <person name="Shin M.W."/>
            <person name="Legler T.C."/>
            <person name="Scow K.M."/>
            <person name="Larimer F.W."/>
            <person name="Lucas S.M."/>
            <person name="Richardson P.M."/>
            <person name="Hristova K.R."/>
        </authorList>
    </citation>
    <scope>NUCLEOTIDE SEQUENCE [LARGE SCALE GENOMIC DNA]</scope>
    <source>
        <strain>ATCC BAA-1232 / LMG 22953 / PM1</strain>
    </source>
</reference>
<dbReference type="EC" id="3.1.-.-" evidence="1"/>
<dbReference type="EMBL" id="CP000555">
    <property type="protein sequence ID" value="ABM96193.1"/>
    <property type="molecule type" value="Genomic_DNA"/>
</dbReference>
<dbReference type="RefSeq" id="WP_011830816.1">
    <property type="nucleotide sequence ID" value="NC_008825.1"/>
</dbReference>
<dbReference type="SMR" id="A2SKV4"/>
<dbReference type="STRING" id="420662.Mpe_A3240"/>
<dbReference type="KEGG" id="mpt:Mpe_A3240"/>
<dbReference type="eggNOG" id="COG0319">
    <property type="taxonomic scope" value="Bacteria"/>
</dbReference>
<dbReference type="HOGENOM" id="CLU_106710_0_1_4"/>
<dbReference type="Proteomes" id="UP000000366">
    <property type="component" value="Chromosome"/>
</dbReference>
<dbReference type="GO" id="GO:0005737">
    <property type="term" value="C:cytoplasm"/>
    <property type="evidence" value="ECO:0007669"/>
    <property type="project" value="UniProtKB-SubCell"/>
</dbReference>
<dbReference type="GO" id="GO:0004222">
    <property type="term" value="F:metalloendopeptidase activity"/>
    <property type="evidence" value="ECO:0007669"/>
    <property type="project" value="InterPro"/>
</dbReference>
<dbReference type="GO" id="GO:0004521">
    <property type="term" value="F:RNA endonuclease activity"/>
    <property type="evidence" value="ECO:0007669"/>
    <property type="project" value="UniProtKB-UniRule"/>
</dbReference>
<dbReference type="GO" id="GO:0008270">
    <property type="term" value="F:zinc ion binding"/>
    <property type="evidence" value="ECO:0007669"/>
    <property type="project" value="UniProtKB-UniRule"/>
</dbReference>
<dbReference type="GO" id="GO:0006364">
    <property type="term" value="P:rRNA processing"/>
    <property type="evidence" value="ECO:0007669"/>
    <property type="project" value="UniProtKB-UniRule"/>
</dbReference>
<dbReference type="Gene3D" id="3.40.390.30">
    <property type="entry name" value="Metalloproteases ('zincins'), catalytic domain"/>
    <property type="match status" value="1"/>
</dbReference>
<dbReference type="HAMAP" id="MF_00009">
    <property type="entry name" value="Endoribonucl_YbeY"/>
    <property type="match status" value="1"/>
</dbReference>
<dbReference type="InterPro" id="IPR023091">
    <property type="entry name" value="MetalPrtase_cat_dom_sf_prd"/>
</dbReference>
<dbReference type="InterPro" id="IPR002036">
    <property type="entry name" value="YbeY"/>
</dbReference>
<dbReference type="InterPro" id="IPR020549">
    <property type="entry name" value="YbeY_CS"/>
</dbReference>
<dbReference type="NCBIfam" id="TIGR00043">
    <property type="entry name" value="rRNA maturation RNase YbeY"/>
    <property type="match status" value="1"/>
</dbReference>
<dbReference type="PANTHER" id="PTHR46986">
    <property type="entry name" value="ENDORIBONUCLEASE YBEY, CHLOROPLASTIC"/>
    <property type="match status" value="1"/>
</dbReference>
<dbReference type="PANTHER" id="PTHR46986:SF1">
    <property type="entry name" value="ENDORIBONUCLEASE YBEY, CHLOROPLASTIC"/>
    <property type="match status" value="1"/>
</dbReference>
<dbReference type="Pfam" id="PF02130">
    <property type="entry name" value="YbeY"/>
    <property type="match status" value="1"/>
</dbReference>
<dbReference type="SUPFAM" id="SSF55486">
    <property type="entry name" value="Metalloproteases ('zincins'), catalytic domain"/>
    <property type="match status" value="1"/>
</dbReference>
<dbReference type="PROSITE" id="PS01306">
    <property type="entry name" value="UPF0054"/>
    <property type="match status" value="1"/>
</dbReference>
<organism>
    <name type="scientific">Methylibium petroleiphilum (strain ATCC BAA-1232 / LMG 22953 / PM1)</name>
    <dbReference type="NCBI Taxonomy" id="420662"/>
    <lineage>
        <taxon>Bacteria</taxon>
        <taxon>Pseudomonadati</taxon>
        <taxon>Pseudomonadota</taxon>
        <taxon>Betaproteobacteria</taxon>
        <taxon>Burkholderiales</taxon>
        <taxon>Sphaerotilaceae</taxon>
        <taxon>Methylibium</taxon>
    </lineage>
</organism>
<proteinExistence type="inferred from homology"/>
<keyword id="KW-0963">Cytoplasm</keyword>
<keyword id="KW-0255">Endonuclease</keyword>
<keyword id="KW-0378">Hydrolase</keyword>
<keyword id="KW-0479">Metal-binding</keyword>
<keyword id="KW-0540">Nuclease</keyword>
<keyword id="KW-1185">Reference proteome</keyword>
<keyword id="KW-0690">Ribosome biogenesis</keyword>
<keyword id="KW-0698">rRNA processing</keyword>
<keyword id="KW-0862">Zinc</keyword>
<feature type="chain" id="PRO_0000321777" description="Endoribonuclease YbeY">
    <location>
        <begin position="1"/>
        <end position="149"/>
    </location>
</feature>
<feature type="binding site" evidence="1">
    <location>
        <position position="112"/>
    </location>
    <ligand>
        <name>Zn(2+)</name>
        <dbReference type="ChEBI" id="CHEBI:29105"/>
        <note>catalytic</note>
    </ligand>
</feature>
<feature type="binding site" evidence="1">
    <location>
        <position position="116"/>
    </location>
    <ligand>
        <name>Zn(2+)</name>
        <dbReference type="ChEBI" id="CHEBI:29105"/>
        <note>catalytic</note>
    </ligand>
</feature>
<feature type="binding site" evidence="1">
    <location>
        <position position="122"/>
    </location>
    <ligand>
        <name>Zn(2+)</name>
        <dbReference type="ChEBI" id="CHEBI:29105"/>
        <note>catalytic</note>
    </ligand>
</feature>
<protein>
    <recommendedName>
        <fullName evidence="1">Endoribonuclease YbeY</fullName>
        <ecNumber evidence="1">3.1.-.-</ecNumber>
    </recommendedName>
</protein>
<name>YBEY_METPP</name>
<comment type="function">
    <text evidence="1">Single strand-specific metallo-endoribonuclease involved in late-stage 70S ribosome quality control and in maturation of the 3' terminus of the 16S rRNA.</text>
</comment>
<comment type="cofactor">
    <cofactor evidence="1">
        <name>Zn(2+)</name>
        <dbReference type="ChEBI" id="CHEBI:29105"/>
    </cofactor>
    <text evidence="1">Binds 1 zinc ion.</text>
</comment>
<comment type="subcellular location">
    <subcellularLocation>
        <location evidence="1">Cytoplasm</location>
    </subcellularLocation>
</comment>
<comment type="similarity">
    <text evidence="1">Belongs to the endoribonuclease YbeY family.</text>
</comment>